<keyword id="KW-0025">Alternative splicing</keyword>
<keyword id="KW-0175">Coiled coil</keyword>
<keyword id="KW-0963">Cytoplasm</keyword>
<keyword id="KW-0539">Nucleus</keyword>
<keyword id="KW-1267">Proteomics identification</keyword>
<keyword id="KW-1185">Reference proteome</keyword>
<keyword id="KW-0677">Repeat</keyword>
<keyword id="KW-0703">Sarcoplasmic reticulum</keyword>
<name>FSD2_HUMAN</name>
<proteinExistence type="evidence at protein level"/>
<comment type="subunit">
    <text evidence="2">Interacts with CMYA5 (By similarity). In cardiac muscles, identified in a complex composed of FSD2, CMYA5 and RYR2 (By similarity).</text>
</comment>
<comment type="interaction">
    <interactant intactId="EBI-5661036">
        <id>A1L4K1</id>
    </interactant>
    <interactant intactId="EBI-745213">
        <id>P29972</id>
        <label>AQP1</label>
    </interactant>
    <organismsDiffer>false</organismsDiffer>
    <experiments>3</experiments>
</comment>
<comment type="interaction">
    <interactant intactId="EBI-5661036">
        <id>A1L4K1</id>
    </interactant>
    <interactant intactId="EBI-638194">
        <id>P53365</id>
        <label>ARFIP2</label>
    </interactant>
    <organismsDiffer>false</organismsDiffer>
    <experiments>3</experiments>
</comment>
<comment type="interaction">
    <interactant intactId="EBI-5661036">
        <id>A1L4K1</id>
    </interactant>
    <interactant intactId="EBI-2690371">
        <id>Q6ZNE5</id>
        <label>ATG14</label>
    </interactant>
    <organismsDiffer>false</organismsDiffer>
    <experiments>3</experiments>
</comment>
<comment type="interaction">
    <interactant intactId="EBI-5661036">
        <id>A1L4K1</id>
    </interactant>
    <interactant intactId="EBI-745073">
        <id>Q9BXY8</id>
        <label>BEX2</label>
    </interactant>
    <organismsDiffer>false</organismsDiffer>
    <experiments>3</experiments>
</comment>
<comment type="interaction">
    <interactant intactId="EBI-5661036">
        <id>A1L4K1</id>
    </interactant>
    <interactant intactId="EBI-741753">
        <id>Q00994</id>
        <label>BEX3</label>
    </interactant>
    <organismsDiffer>false</organismsDiffer>
    <experiments>6</experiments>
</comment>
<comment type="interaction">
    <interactant intactId="EBI-5661036">
        <id>A1L4K1</id>
    </interactant>
    <interactant intactId="EBI-10304361">
        <id>Q9H0E9-2</id>
        <label>BRD8</label>
    </interactant>
    <organismsDiffer>false</organismsDiffer>
    <experiments>6</experiments>
</comment>
<comment type="interaction">
    <interactant intactId="EBI-5661036">
        <id>A1L4K1</id>
    </interactant>
    <interactant intactId="EBI-747505">
        <id>Q8TAB5</id>
        <label>C1orf216</label>
    </interactant>
    <organismsDiffer>false</organismsDiffer>
    <experiments>3</experiments>
</comment>
<comment type="interaction">
    <interactant intactId="EBI-5661036">
        <id>A1L4K1</id>
    </interactant>
    <interactant intactId="EBI-18121830">
        <id>Q9P1Y5-2</id>
        <label>CAMSAP3</label>
    </interactant>
    <organismsDiffer>false</organismsDiffer>
    <experiments>3</experiments>
</comment>
<comment type="interaction">
    <interactant intactId="EBI-5661036">
        <id>A1L4K1</id>
    </interactant>
    <interactant intactId="EBI-712912">
        <id>Q9HC52</id>
        <label>CBX8</label>
    </interactant>
    <organismsDiffer>false</organismsDiffer>
    <experiments>6</experiments>
</comment>
<comment type="interaction">
    <interactant intactId="EBI-5661036">
        <id>A1L4K1</id>
    </interactant>
    <interactant intactId="EBI-745040">
        <id>Q8NEF3</id>
        <label>CCDC112</label>
    </interactant>
    <organismsDiffer>false</organismsDiffer>
    <experiments>3</experiments>
</comment>
<comment type="interaction">
    <interactant intactId="EBI-5661036">
        <id>A1L4K1</id>
    </interactant>
    <interactant intactId="EBI-744556">
        <id>Q96HB5</id>
        <label>CCDC120</label>
    </interactant>
    <organismsDiffer>false</organismsDiffer>
    <experiments>3</experiments>
</comment>
<comment type="interaction">
    <interactant intactId="EBI-5661036">
        <id>A1L4K1</id>
    </interactant>
    <interactant intactId="EBI-10749669">
        <id>Q8IYE0</id>
        <label>CCDC146</label>
    </interactant>
    <organismsDiffer>false</organismsDiffer>
    <experiments>3</experiments>
</comment>
<comment type="interaction">
    <interactant intactId="EBI-5661036">
        <id>A1L4K1</id>
    </interactant>
    <interactant intactId="EBI-10175300">
        <id>Q8TD31-3</id>
        <label>CCHCR1</label>
    </interactant>
    <organismsDiffer>false</organismsDiffer>
    <experiments>6</experiments>
</comment>
<comment type="interaction">
    <interactant intactId="EBI-5661036">
        <id>A1L4K1</id>
    </interactant>
    <interactant intactId="EBI-930143">
        <id>Q6P1J9</id>
        <label>CDC73</label>
    </interactant>
    <organismsDiffer>false</organismsDiffer>
    <experiments>9</experiments>
</comment>
<comment type="interaction">
    <interactant intactId="EBI-5661036">
        <id>A1L4K1</id>
    </interactant>
    <interactant intactId="EBI-746238">
        <id>Q07002</id>
        <label>CDK18</label>
    </interactant>
    <organismsDiffer>false</organismsDiffer>
    <experiments>3</experiments>
</comment>
<comment type="interaction">
    <interactant intactId="EBI-5661036">
        <id>A1L4K1</id>
    </interactant>
    <interactant intactId="EBI-1046676">
        <id>P31146</id>
        <label>CORO1A</label>
    </interactant>
    <organismsDiffer>false</organismsDiffer>
    <experiments>7</experiments>
</comment>
<comment type="interaction">
    <interactant intactId="EBI-5661036">
        <id>A1L4K1</id>
    </interactant>
    <interactant intactId="EBI-1188472">
        <id>P78358</id>
        <label>CTAG1B</label>
    </interactant>
    <organismsDiffer>false</organismsDiffer>
    <experiments>3</experiments>
</comment>
<comment type="interaction">
    <interactant intactId="EBI-5661036">
        <id>A1L4K1</id>
    </interactant>
    <interactant intactId="EBI-5453285">
        <id>Q2TBE0</id>
        <label>CWF19L2</label>
    </interactant>
    <organismsDiffer>false</organismsDiffer>
    <experiments>3</experiments>
</comment>
<comment type="interaction">
    <interactant intactId="EBI-5661036">
        <id>A1L4K1</id>
    </interactant>
    <interactant intactId="EBI-14148644">
        <id>O43602-2</id>
        <label>DCX</label>
    </interactant>
    <organismsDiffer>false</organismsDiffer>
    <experiments>3</experiments>
</comment>
<comment type="interaction">
    <interactant intactId="EBI-5661036">
        <id>A1L4K1</id>
    </interactant>
    <interactant intactId="EBI-11984733">
        <id>O60941-5</id>
        <label>DTNB</label>
    </interactant>
    <organismsDiffer>false</organismsDiffer>
    <experiments>3</experiments>
</comment>
<comment type="interaction">
    <interactant intactId="EBI-5661036">
        <id>A1L4K1</id>
    </interactant>
    <interactant intactId="EBI-744099">
        <id>Q9H0I2</id>
        <label>ENKD1</label>
    </interactant>
    <organismsDiffer>false</organismsDiffer>
    <experiments>3</experiments>
</comment>
<comment type="interaction">
    <interactant intactId="EBI-5661036">
        <id>A1L4K1</id>
    </interactant>
    <interactant intactId="EBI-1052334">
        <id>P10768</id>
        <label>ESD</label>
    </interactant>
    <organismsDiffer>false</organismsDiffer>
    <experiments>8</experiments>
</comment>
<comment type="interaction">
    <interactant intactId="EBI-5661036">
        <id>A1L4K1</id>
    </interactant>
    <interactant intactId="EBI-1052278">
        <id>O60645</id>
        <label>EXOC3</label>
    </interactant>
    <organismsDiffer>false</organismsDiffer>
    <experiments>3</experiments>
</comment>
<comment type="interaction">
    <interactant intactId="EBI-5661036">
        <id>A1L4K1</id>
    </interactant>
    <interactant intactId="EBI-10192902">
        <id>O95990-3</id>
        <label>FAM107A</label>
    </interactant>
    <organismsDiffer>false</organismsDiffer>
    <experiments>3</experiments>
</comment>
<comment type="interaction">
    <interactant intactId="EBI-5661036">
        <id>A1L4K1</id>
    </interactant>
    <interactant intactId="EBI-1752811">
        <id>Q9BQ89</id>
        <label>FAM110A</label>
    </interactant>
    <organismsDiffer>false</organismsDiffer>
    <experiments>3</experiments>
</comment>
<comment type="interaction">
    <interactant intactId="EBI-5661036">
        <id>A1L4K1</id>
    </interactant>
    <interactant intactId="EBI-719941">
        <id>Q3B820</id>
        <label>FAM161A</label>
    </interactant>
    <organismsDiffer>false</organismsDiffer>
    <experiments>3</experiments>
</comment>
<comment type="interaction">
    <interactant intactId="EBI-5661036">
        <id>A1L4K1</id>
    </interactant>
    <interactant intactId="EBI-742802">
        <id>Q9Y247</id>
        <label>FAM50B</label>
    </interactant>
    <organismsDiffer>false</organismsDiffer>
    <experiments>3</experiments>
</comment>
<comment type="interaction">
    <interactant intactId="EBI-5661036">
        <id>A1L4K1</id>
    </interactant>
    <interactant intactId="EBI-6658203">
        <id>Q86YD7</id>
        <label>FAM90A1</label>
    </interactant>
    <organismsDiffer>false</organismsDiffer>
    <experiments>6</experiments>
</comment>
<comment type="interaction">
    <interactant intactId="EBI-5661036">
        <id>A1L4K1</id>
    </interactant>
    <interactant intactId="EBI-2513774">
        <id>O95363</id>
        <label>FARS2</label>
    </interactant>
    <organismsDiffer>false</organismsDiffer>
    <experiments>3</experiments>
</comment>
<comment type="interaction">
    <interactant intactId="EBI-5661036">
        <id>A1L4K1</id>
    </interactant>
    <interactant intactId="EBI-10224470">
        <id>Q06787-8</id>
        <label>FMR1</label>
    </interactant>
    <organismsDiffer>false</organismsDiffer>
    <experiments>3</experiments>
</comment>
<comment type="interaction">
    <interactant intactId="EBI-5661036">
        <id>A1L4K1</id>
    </interactant>
    <interactant intactId="EBI-11953488">
        <id>P56524-2</id>
        <label>HDAC4</label>
    </interactant>
    <organismsDiffer>false</organismsDiffer>
    <experiments>3</experiments>
</comment>
<comment type="interaction">
    <interactant intactId="EBI-5661036">
        <id>A1L4K1</id>
    </interactant>
    <interactant intactId="EBI-740220">
        <id>O14964</id>
        <label>HGS</label>
    </interactant>
    <organismsDiffer>false</organismsDiffer>
    <experiments>3</experiments>
</comment>
<comment type="interaction">
    <interactant intactId="EBI-5661036">
        <id>A1L4K1</id>
    </interactant>
    <interactant intactId="EBI-744203">
        <id>Q8IY31</id>
        <label>IFT20</label>
    </interactant>
    <organismsDiffer>false</organismsDiffer>
    <experiments>3</experiments>
</comment>
<comment type="interaction">
    <interactant intactId="EBI-5661036">
        <id>A1L4K1</id>
    </interactant>
    <interactant intactId="EBI-740244">
        <id>Q7Z3B3</id>
        <label>KANSL1</label>
    </interactant>
    <organismsDiffer>false</organismsDiffer>
    <experiments>3</experiments>
</comment>
<comment type="interaction">
    <interactant intactId="EBI-5661036">
        <id>A1L4K1</id>
    </interactant>
    <interactant intactId="EBI-7851314">
        <id>Q2TBA0</id>
        <label>KLHL40</label>
    </interactant>
    <organismsDiffer>false</organismsDiffer>
    <experiments>3</experiments>
</comment>
<comment type="interaction">
    <interactant intactId="EBI-5661036">
        <id>A1L4K1</id>
    </interactant>
    <interactant intactId="EBI-10253976">
        <id>Q6PJG3</id>
        <label>LATS1</label>
    </interactant>
    <organismsDiffer>false</organismsDiffer>
    <experiments>3</experiments>
</comment>
<comment type="interaction">
    <interactant intactId="EBI-5661036">
        <id>A1L4K1</id>
    </interactant>
    <interactant intactId="EBI-726510">
        <id>Q96BZ8</id>
        <label>LENG1</label>
    </interactant>
    <organismsDiffer>false</organismsDiffer>
    <experiments>6</experiments>
</comment>
<comment type="interaction">
    <interactant intactId="EBI-5661036">
        <id>A1L4K1</id>
    </interactant>
    <interactant intactId="EBI-739832">
        <id>Q8TBB1</id>
        <label>LNX1</label>
    </interactant>
    <organismsDiffer>false</organismsDiffer>
    <experiments>3</experiments>
</comment>
<comment type="interaction">
    <interactant intactId="EBI-5661036">
        <id>A1L4K1</id>
    </interactant>
    <interactant intactId="EBI-348259">
        <id>Q96EZ8</id>
        <label>MCRS1</label>
    </interactant>
    <organismsDiffer>false</organismsDiffer>
    <experiments>3</experiments>
</comment>
<comment type="interaction">
    <interactant intactId="EBI-5661036">
        <id>A1L4K1</id>
    </interactant>
    <interactant intactId="EBI-14086479">
        <id>Q8IVT4</id>
        <label>MGC50722</label>
    </interactant>
    <organismsDiffer>false</organismsDiffer>
    <experiments>3</experiments>
</comment>
<comment type="interaction">
    <interactant intactId="EBI-5661036">
        <id>A1L4K1</id>
    </interactant>
    <interactant intactId="EBI-10172526">
        <id>Q9UJV3-2</id>
        <label>MID2</label>
    </interactant>
    <organismsDiffer>false</organismsDiffer>
    <experiments>3</experiments>
</comment>
<comment type="interaction">
    <interactant intactId="EBI-5661036">
        <id>A1L4K1</id>
    </interactant>
    <interactant intactId="EBI-5453723">
        <id>Q9Y3B7</id>
        <label>MRPL11</label>
    </interactant>
    <organismsDiffer>false</organismsDiffer>
    <experiments>6</experiments>
</comment>
<comment type="interaction">
    <interactant intactId="EBI-5661036">
        <id>A1L4K1</id>
    </interactant>
    <interactant intactId="EBI-536879">
        <id>O43482</id>
        <label>OIP5</label>
    </interactant>
    <organismsDiffer>false</organismsDiffer>
    <experiments>3</experiments>
</comment>
<comment type="interaction">
    <interactant intactId="EBI-5661036">
        <id>A1L4K1</id>
    </interactant>
    <interactant intactId="EBI-2862111">
        <id>Q96HP4</id>
        <label>OXNAD1</label>
    </interactant>
    <organismsDiffer>false</organismsDiffer>
    <experiments>3</experiments>
</comment>
<comment type="interaction">
    <interactant intactId="EBI-5661036">
        <id>A1L4K1</id>
    </interactant>
    <interactant intactId="EBI-10244393">
        <id>Q5JS98</id>
        <label>PBX3</label>
    </interactant>
    <organismsDiffer>false</organismsDiffer>
    <experiments>3</experiments>
</comment>
<comment type="interaction">
    <interactant intactId="EBI-5661036">
        <id>A1L4K1</id>
    </interactant>
    <interactant intactId="EBI-741171">
        <id>Q96AL5</id>
        <label>PBX3</label>
    </interactant>
    <organismsDiffer>false</organismsDiffer>
    <experiments>3</experiments>
</comment>
<comment type="interaction">
    <interactant intactId="EBI-5661036">
        <id>A1L4K1</id>
    </interactant>
    <interactant intactId="EBI-749096">
        <id>Q8N381</id>
        <label>PIK3R3</label>
    </interactant>
    <organismsDiffer>false</organismsDiffer>
    <experiments>3</experiments>
</comment>
<comment type="interaction">
    <interactant intactId="EBI-5661036">
        <id>A1L4K1</id>
    </interactant>
    <interactant intactId="EBI-10171633">
        <id>Q96PV4</id>
        <label>PNMA5</label>
    </interactant>
    <organismsDiffer>false</organismsDiffer>
    <experiments>3</experiments>
</comment>
<comment type="interaction">
    <interactant intactId="EBI-5661036">
        <id>A1L4K1</id>
    </interactant>
    <interactant intactId="EBI-10320765">
        <id>Q9UGP5-2</id>
        <label>POLL</label>
    </interactant>
    <organismsDiffer>false</organismsDiffer>
    <experiments>4</experiments>
</comment>
<comment type="interaction">
    <interactant intactId="EBI-5661036">
        <id>A1L4K1</id>
    </interactant>
    <interactant intactId="EBI-2557469">
        <id>Q6NYC8</id>
        <label>PPP1R18</label>
    </interactant>
    <organismsDiffer>false</organismsDiffer>
    <experiments>6</experiments>
</comment>
<comment type="interaction">
    <interactant intactId="EBI-5661036">
        <id>A1L4K1</id>
    </interactant>
    <interactant intactId="EBI-396563">
        <id>Q14738</id>
        <label>PPP2R5D</label>
    </interactant>
    <organismsDiffer>false</organismsDiffer>
    <experiments>3</experiments>
</comment>
<comment type="interaction">
    <interactant intactId="EBI-5661036">
        <id>A1L4K1</id>
    </interactant>
    <interactant intactId="EBI-2798416">
        <id>Q99633</id>
        <label>PRPF18</label>
    </interactant>
    <organismsDiffer>false</organismsDiffer>
    <experiments>3</experiments>
</comment>
<comment type="interaction">
    <interactant intactId="EBI-5661036">
        <id>A1L4K1</id>
    </interactant>
    <interactant intactId="EBI-1567797">
        <id>Q8WWY3</id>
        <label>PRPF31</label>
    </interactant>
    <organismsDiffer>false</organismsDiffer>
    <experiments>3</experiments>
</comment>
<comment type="interaction">
    <interactant intactId="EBI-5661036">
        <id>A1L4K1</id>
    </interactant>
    <interactant intactId="EBI-603350">
        <id>P28070</id>
        <label>PSMB4</label>
    </interactant>
    <organismsDiffer>false</organismsDiffer>
    <experiments>3</experiments>
</comment>
<comment type="interaction">
    <interactant intactId="EBI-5661036">
        <id>A1L4K1</id>
    </interactant>
    <interactant intactId="EBI-1504830">
        <id>Q9P2K3-2</id>
        <label>RCOR3</label>
    </interactant>
    <organismsDiffer>false</organismsDiffer>
    <experiments>3</experiments>
</comment>
<comment type="interaction">
    <interactant intactId="EBI-5661036">
        <id>A1L4K1</id>
    </interactant>
    <interactant intactId="EBI-373337">
        <id>O76064</id>
        <label>RNF8</label>
    </interactant>
    <organismsDiffer>false</organismsDiffer>
    <experiments>3</experiments>
</comment>
<comment type="interaction">
    <interactant intactId="EBI-5661036">
        <id>A1L4K1</id>
    </interactant>
    <interactant intactId="EBI-748391">
        <id>Q9BWG6</id>
        <label>SCNM1</label>
    </interactant>
    <organismsDiffer>false</organismsDiffer>
    <experiments>3</experiments>
</comment>
<comment type="interaction">
    <interactant intactId="EBI-5661036">
        <id>A1L4K1</id>
    </interactant>
    <interactant intactId="EBI-747035">
        <id>Q9H788</id>
        <label>SH2D4A</label>
    </interactant>
    <organismsDiffer>false</organismsDiffer>
    <experiments>6</experiments>
</comment>
<comment type="interaction">
    <interactant intactId="EBI-5661036">
        <id>A1L4K1</id>
    </interactant>
    <interactant intactId="EBI-10308083">
        <id>Q9H788-2</id>
        <label>SH2D4A</label>
    </interactant>
    <organismsDiffer>false</organismsDiffer>
    <experiments>3</experiments>
</comment>
<comment type="interaction">
    <interactant intactId="EBI-5661036">
        <id>A1L4K1</id>
    </interactant>
    <interactant intactId="EBI-455078">
        <id>Q969G3</id>
        <label>SMARCE1</label>
    </interactant>
    <organismsDiffer>false</organismsDiffer>
    <experiments>3</experiments>
</comment>
<comment type="interaction">
    <interactant intactId="EBI-5661036">
        <id>A1L4K1</id>
    </interactant>
    <interactant intactId="EBI-296723">
        <id>O95295</id>
        <label>SNAPIN</label>
    </interactant>
    <organismsDiffer>false</organismsDiffer>
    <experiments>3</experiments>
</comment>
<comment type="interaction">
    <interactant intactId="EBI-5661036">
        <id>A1L4K1</id>
    </interactant>
    <interactant intactId="EBI-372911">
        <id>Q9H0A9</id>
        <label>SPATC1L</label>
    </interactant>
    <organismsDiffer>false</organismsDiffer>
    <experiments>4</experiments>
</comment>
<comment type="interaction">
    <interactant intactId="EBI-5661036">
        <id>A1L4K1</id>
    </interactant>
    <interactant intactId="EBI-11995806">
        <id>Q9H0A9-2</id>
        <label>SPATC1L</label>
    </interactant>
    <organismsDiffer>false</organismsDiffer>
    <experiments>3</experiments>
</comment>
<comment type="interaction">
    <interactant intactId="EBI-5661036">
        <id>A1L4K1</id>
    </interactant>
    <interactant intactId="EBI-954696">
        <id>Q8N8B7</id>
        <label>TCEANC</label>
    </interactant>
    <organismsDiffer>false</organismsDiffer>
    <experiments>3</experiments>
</comment>
<comment type="interaction">
    <interactant intactId="EBI-5661036">
        <id>A1L4K1</id>
    </interactant>
    <interactant intactId="EBI-741350">
        <id>Q9BT49</id>
        <label>THAP7</label>
    </interactant>
    <organismsDiffer>false</organismsDiffer>
    <experiments>3</experiments>
</comment>
<comment type="interaction">
    <interactant intactId="EBI-5661036">
        <id>A1L4K1</id>
    </interactant>
    <interactant intactId="EBI-717810">
        <id>Q08117</id>
        <label>TLE5</label>
    </interactant>
    <organismsDiffer>false</organismsDiffer>
    <experiments>4</experiments>
</comment>
<comment type="interaction">
    <interactant intactId="EBI-5661036">
        <id>A1L4K1</id>
    </interactant>
    <interactant intactId="EBI-11741437">
        <id>Q08117-2</id>
        <label>TLE5</label>
    </interactant>
    <organismsDiffer>false</organismsDiffer>
    <experiments>3</experiments>
</comment>
<comment type="interaction">
    <interactant intactId="EBI-5661036">
        <id>A1L4K1</id>
    </interactant>
    <interactant intactId="EBI-10241197">
        <id>Q3SY00</id>
        <label>TSGA10IP</label>
    </interactant>
    <organismsDiffer>false</organismsDiffer>
    <experiments>3</experiments>
</comment>
<comment type="interaction">
    <interactant intactId="EBI-5661036">
        <id>A1L4K1</id>
    </interactant>
    <interactant intactId="EBI-9090990">
        <id>Q5W5X9-3</id>
        <label>TTC23</label>
    </interactant>
    <organismsDiffer>false</organismsDiffer>
    <experiments>3</experiments>
</comment>
<comment type="interaction">
    <interactant intactId="EBI-5661036">
        <id>A1L4K1</id>
    </interactant>
    <interactant intactId="EBI-17208936">
        <id>P0CB47</id>
        <label>UBTFL1</label>
    </interactant>
    <organismsDiffer>false</organismsDiffer>
    <experiments>3</experiments>
</comment>
<comment type="interaction">
    <interactant intactId="EBI-5661036">
        <id>A1L4K1</id>
    </interactant>
    <interactant intactId="EBI-11980193">
        <id>Q14119</id>
        <label>VEZF1</label>
    </interactant>
    <organismsDiffer>false</organismsDiffer>
    <experiments>3</experiments>
</comment>
<comment type="interaction">
    <interactant intactId="EBI-5661036">
        <id>A1L4K1</id>
    </interactant>
    <interactant intactId="EBI-740767">
        <id>Q53FD0</id>
        <label>ZC2HC1C</label>
    </interactant>
    <organismsDiffer>false</organismsDiffer>
    <experiments>3</experiments>
</comment>
<comment type="interaction">
    <interactant intactId="EBI-5661036">
        <id>A1L4K1</id>
    </interactant>
    <interactant intactId="EBI-2682299">
        <id>Q96NC0</id>
        <label>ZMAT2</label>
    </interactant>
    <organismsDiffer>false</organismsDiffer>
    <experiments>3</experiments>
</comment>
<comment type="interaction">
    <interactant intactId="EBI-5661036">
        <id>A1L4K1</id>
    </interactant>
    <interactant intactId="EBI-2555767">
        <id>Q15973</id>
        <label>ZNF124</label>
    </interactant>
    <organismsDiffer>false</organismsDiffer>
    <experiments>3</experiments>
</comment>
<comment type="interaction">
    <interactant intactId="EBI-5661036">
        <id>A1L4K1</id>
    </interactant>
    <interactant intactId="EBI-717634">
        <id>P17024</id>
        <label>ZNF20</label>
    </interactant>
    <organismsDiffer>false</organismsDiffer>
    <experiments>3</experiments>
</comment>
<comment type="interaction">
    <interactant intactId="EBI-5661036">
        <id>A1L4K1</id>
    </interactant>
    <interactant intactId="EBI-1105361">
        <id>Q9UIE0</id>
        <label>ZNF230</label>
    </interactant>
    <organismsDiffer>false</organismsDiffer>
    <experiments>3</experiments>
</comment>
<comment type="interaction">
    <interactant intactId="EBI-5661036">
        <id>A1L4K1</id>
    </interactant>
    <interactant intactId="EBI-11041653">
        <id>P13682</id>
        <label>ZNF35</label>
    </interactant>
    <organismsDiffer>false</organismsDiffer>
    <experiments>3</experiments>
</comment>
<comment type="interaction">
    <interactant intactId="EBI-5661036">
        <id>A1L4K1</id>
    </interactant>
    <interactant intactId="EBI-347633">
        <id>Q9H9D4</id>
        <label>ZNF408</label>
    </interactant>
    <organismsDiffer>false</organismsDiffer>
    <experiments>3</experiments>
</comment>
<comment type="interaction">
    <interactant intactId="EBI-5661036">
        <id>A1L4K1</id>
    </interactant>
    <interactant intactId="EBI-720304">
        <id>Q86VK4</id>
        <label>ZNF410</label>
    </interactant>
    <organismsDiffer>false</organismsDiffer>
    <experiments>3</experiments>
</comment>
<comment type="interaction">
    <interactant intactId="EBI-5661036">
        <id>A1L4K1</id>
    </interactant>
    <interactant intactId="EBI-11741890">
        <id>Q86VK4-3</id>
        <label>ZNF410</label>
    </interactant>
    <organismsDiffer>false</organismsDiffer>
    <experiments>3</experiments>
</comment>
<comment type="interaction">
    <interactant intactId="EBI-5661036">
        <id>A1L4K1</id>
    </interactant>
    <interactant intactId="EBI-740727">
        <id>Q8TAU3</id>
        <label>ZNF417</label>
    </interactant>
    <organismsDiffer>false</organismsDiffer>
    <experiments>6</experiments>
</comment>
<comment type="interaction">
    <interactant intactId="EBI-5661036">
        <id>A1L4K1</id>
    </interactant>
    <interactant intactId="EBI-1105370">
        <id>Q9ULM2</id>
        <label>ZNF490</label>
    </interactant>
    <organismsDiffer>false</organismsDiffer>
    <experiments>3</experiments>
</comment>
<comment type="interaction">
    <interactant intactId="EBI-5661036">
        <id>A1L4K1</id>
    </interactant>
    <interactant intactId="EBI-10172590">
        <id>Q7Z3I7</id>
        <label>ZNF572</label>
    </interactant>
    <organismsDiffer>false</organismsDiffer>
    <experiments>7</experiments>
</comment>
<comment type="interaction">
    <interactant intactId="EBI-5661036">
        <id>A1L4K1</id>
    </interactant>
    <interactant intactId="EBI-746277">
        <id>Q9UK33</id>
        <label>ZNF580</label>
    </interactant>
    <organismsDiffer>false</organismsDiffer>
    <experiments>3</experiments>
</comment>
<comment type="interaction">
    <interactant intactId="EBI-5661036">
        <id>A1L4K1</id>
    </interactant>
    <interactant intactId="EBI-745520">
        <id>Q9P0T4</id>
        <label>ZNF581</label>
    </interactant>
    <organismsDiffer>false</organismsDiffer>
    <experiments>6</experiments>
</comment>
<comment type="interaction">
    <interactant intactId="EBI-5661036">
        <id>A1L4K1</id>
    </interactant>
    <interactant intactId="EBI-6427977">
        <id>Q96SQ5</id>
        <label>ZNF587</label>
    </interactant>
    <organismsDiffer>false</organismsDiffer>
    <experiments>6</experiments>
</comment>
<comment type="interaction">
    <interactant intactId="EBI-5661036">
        <id>A1L4K1</id>
    </interactant>
    <interactant intactId="EBI-11985915">
        <id>Q5T619</id>
        <label>ZNF648</label>
    </interactant>
    <organismsDiffer>false</organismsDiffer>
    <experiments>3</experiments>
</comment>
<comment type="interaction">
    <interactant intactId="EBI-5661036">
        <id>A1L4K1</id>
    </interactant>
    <interactant intactId="EBI-7254550">
        <id>P36508</id>
        <label>ZNF76</label>
    </interactant>
    <organismsDiffer>false</organismsDiffer>
    <experiments>3</experiments>
</comment>
<comment type="interaction">
    <interactant intactId="EBI-5661036">
        <id>A1L4K1</id>
    </interactant>
    <interactant intactId="EBI-10251462">
        <id>Q6NX45</id>
        <label>ZNF774</label>
    </interactant>
    <organismsDiffer>false</organismsDiffer>
    <experiments>3</experiments>
</comment>
<comment type="interaction">
    <interactant intactId="EBI-5661036">
        <id>A1L4K1</id>
    </interactant>
    <interactant intactId="EBI-11975599">
        <id>Q9ULD5</id>
        <label>ZNF777</label>
    </interactant>
    <organismsDiffer>false</organismsDiffer>
    <experiments>3</experiments>
</comment>
<comment type="interaction">
    <interactant intactId="EBI-5661036">
        <id>A1L4K1</id>
    </interactant>
    <interactant intactId="EBI-5667516">
        <id>Q9Y2P0</id>
        <label>ZNF835</label>
    </interactant>
    <organismsDiffer>false</organismsDiffer>
    <experiments>3</experiments>
</comment>
<comment type="interaction">
    <interactant intactId="EBI-5661036">
        <id>A1L4K1</id>
    </interactant>
    <interactant intactId="EBI-11962574">
        <id>Q96EG3</id>
        <label>ZNF837</label>
    </interactant>
    <organismsDiffer>false</organismsDiffer>
    <experiments>3</experiments>
</comment>
<comment type="interaction">
    <interactant intactId="EBI-5661036">
        <id>A1L4K1</id>
    </interactant>
    <interactant intactId="EBI-3920053">
        <id>Q16670</id>
        <label>ZSCAN26</label>
    </interactant>
    <organismsDiffer>false</organismsDiffer>
    <experiments>3</experiments>
</comment>
<comment type="interaction">
    <interactant intactId="EBI-5661036">
        <id>A1L4K1</id>
    </interactant>
    <interactant intactId="EBI-10307481">
        <id>Q9H6F0</id>
    </interactant>
    <organismsDiffer>false</organismsDiffer>
    <experiments>3</experiments>
</comment>
<comment type="subcellular location">
    <subcellularLocation>
        <location evidence="1">Nucleus</location>
    </subcellularLocation>
    <subcellularLocation>
        <location evidence="1">Sarcoplasmic reticulum</location>
    </subcellularLocation>
    <subcellularLocation>
        <location evidence="1">Cytoplasm</location>
        <location evidence="1">Perinuclear region</location>
    </subcellularLocation>
    <text evidence="1">In skeletal muscles and striated muscles flanks Z-disks. Partially colocalizes with RYR2 in the sarcoplasmic reticulum.</text>
</comment>
<comment type="alternative products">
    <event type="alternative splicing"/>
    <isoform>
        <id>A1L4K1-1</id>
        <name>1</name>
        <sequence type="displayed"/>
    </isoform>
    <isoform>
        <id>A1L4K1-2</id>
        <name>2</name>
        <sequence type="described" ref="VSP_054600"/>
    </isoform>
</comment>
<sequence length="749" mass="85385">MEEESGEELGLDRSTPKDFHFYHMDLYDSEDRLHLFPEENTRMRKVVQAEMANESRGAGDGKAQRDLQEEVDELVHLYGLEDDHELGDEFVDENIPRTGVSEYPPYMMKRRDPAREQRDWRLSGEAAEAEDLGFGGWGSAGQCQDLREAYRYTHGRASEEYECYVIPEEEDEEEAADVFCVTCKTPIRAFQKVFDEHKEHEVIPLNEALESAKDEIHKNMYKLEKQIIEMENFANHLEEVFITVEENFGKQEQNFESHYNEILETLAQKYEEKIQALGEKKKEKLEALYGQLVSCGENLDTCKELMETIEEMCHEEKVDFIKDAVAMADRLGKFLKTKTDVEISAQPEFEDQTLDFSDVEQLMGSINTIPAPSAPVINPQVPNSATGSSVRVCWSLYSDDTVESYQLSYRPVQDSSPGTDQAEFTVTVKETYCSVTNLVPNTQYEFWVTAHNRAGPSPSSERAVYMTAPSPPIIKTKEIRSCEEAVLICWESGNLNPVDSYTVELTQAESPEASGVTESVVGIPTCESVVQLQPGRSYIIYVRALNMGGPSVRSEPATVHTIGSYFRLNKDTCHPWLTISEDGLTAVRSERRTPARELSPSDTHFTRCVAVMGNLIPVRGHHYWEVEVDEHLDYRVGVAFADVRKQEDLGANCLSWCMRHTFASSRHKYEFLHNRTTPDIRITVPPKKIGILLDYEHSKLSFFNVDLSQHLYTFSCQLHEFVHPCFSLEKPGCLKVHNGISMPKHVTFY</sequence>
<dbReference type="EMBL" id="AK122875">
    <property type="protein sequence ID" value="BAG53773.1"/>
    <property type="molecule type" value="mRNA"/>
</dbReference>
<dbReference type="EMBL" id="AC044907">
    <property type="status" value="NOT_ANNOTATED_CDS"/>
    <property type="molecule type" value="Genomic_DNA"/>
</dbReference>
<dbReference type="EMBL" id="AC105339">
    <property type="status" value="NOT_ANNOTATED_CDS"/>
    <property type="molecule type" value="Genomic_DNA"/>
</dbReference>
<dbReference type="EMBL" id="BC130569">
    <property type="protein sequence ID" value="AAI30570.1"/>
    <property type="molecule type" value="mRNA"/>
</dbReference>
<dbReference type="EMBL" id="BC144175">
    <property type="protein sequence ID" value="AAI44176.1"/>
    <property type="molecule type" value="mRNA"/>
</dbReference>
<dbReference type="CCDS" id="CCDS45332.1">
    <molecule id="A1L4K1-1"/>
</dbReference>
<dbReference type="CCDS" id="CCDS61738.1">
    <molecule id="A1L4K1-2"/>
</dbReference>
<dbReference type="RefSeq" id="NP_001007123.1">
    <molecule id="A1L4K1-1"/>
    <property type="nucleotide sequence ID" value="NM_001007122.4"/>
</dbReference>
<dbReference type="RefSeq" id="NP_001268734.1">
    <molecule id="A1L4K1-2"/>
    <property type="nucleotide sequence ID" value="NM_001281805.2"/>
</dbReference>
<dbReference type="RefSeq" id="NP_001268735.1">
    <molecule id="A1L4K1-2"/>
    <property type="nucleotide sequence ID" value="NM_001281806.2"/>
</dbReference>
<dbReference type="RefSeq" id="XP_005272482.1">
    <molecule id="A1L4K1-1"/>
    <property type="nucleotide sequence ID" value="XM_005272425.6"/>
</dbReference>
<dbReference type="RefSeq" id="XP_024305612.1">
    <molecule id="A1L4K1-1"/>
    <property type="nucleotide sequence ID" value="XM_024449844.2"/>
</dbReference>
<dbReference type="RefSeq" id="XP_024305613.1">
    <molecule id="A1L4K1-1"/>
    <property type="nucleotide sequence ID" value="XM_024449845.2"/>
</dbReference>
<dbReference type="SMR" id="A1L4K1"/>
<dbReference type="BioGRID" id="125831">
    <property type="interactions" value="126"/>
</dbReference>
<dbReference type="FunCoup" id="A1L4K1">
    <property type="interactions" value="305"/>
</dbReference>
<dbReference type="IntAct" id="A1L4K1">
    <property type="interactions" value="113"/>
</dbReference>
<dbReference type="STRING" id="9606.ENSP00000335651"/>
<dbReference type="iPTMnet" id="A1L4K1"/>
<dbReference type="PhosphoSitePlus" id="A1L4K1"/>
<dbReference type="BioMuta" id="FSD2"/>
<dbReference type="jPOST" id="A1L4K1"/>
<dbReference type="MassIVE" id="A1L4K1"/>
<dbReference type="PaxDb" id="9606-ENSP00000335651"/>
<dbReference type="PeptideAtlas" id="A1L4K1"/>
<dbReference type="ProteomicsDB" id="152">
    <molecule id="A1L4K1-1"/>
</dbReference>
<dbReference type="ProteomicsDB" id="7242"/>
<dbReference type="Antibodypedia" id="55562">
    <property type="antibodies" value="118 antibodies from 22 providers"/>
</dbReference>
<dbReference type="DNASU" id="123722"/>
<dbReference type="Ensembl" id="ENST00000334574.12">
    <molecule id="A1L4K1-1"/>
    <property type="protein sequence ID" value="ENSP00000335651.8"/>
    <property type="gene ID" value="ENSG00000186628.12"/>
</dbReference>
<dbReference type="Ensembl" id="ENST00000541889.1">
    <molecule id="A1L4K1-2"/>
    <property type="protein sequence ID" value="ENSP00000444078.1"/>
    <property type="gene ID" value="ENSG00000186628.12"/>
</dbReference>
<dbReference type="GeneID" id="123722"/>
<dbReference type="KEGG" id="hsa:123722"/>
<dbReference type="MANE-Select" id="ENST00000334574.12">
    <property type="protein sequence ID" value="ENSP00000335651.8"/>
    <property type="RefSeq nucleotide sequence ID" value="NM_001007122.4"/>
    <property type="RefSeq protein sequence ID" value="NP_001007123.1"/>
</dbReference>
<dbReference type="UCSC" id="uc002bjd.4">
    <molecule id="A1L4K1-1"/>
    <property type="organism name" value="human"/>
</dbReference>
<dbReference type="AGR" id="HGNC:18024"/>
<dbReference type="CTD" id="123722"/>
<dbReference type="DisGeNET" id="123722"/>
<dbReference type="GeneCards" id="FSD2"/>
<dbReference type="HGNC" id="HGNC:18024">
    <property type="gene designation" value="FSD2"/>
</dbReference>
<dbReference type="HPA" id="ENSG00000186628">
    <property type="expression patterns" value="Group enriched (heart muscle, skeletal muscle, tongue)"/>
</dbReference>
<dbReference type="neXtProt" id="NX_A1L4K1"/>
<dbReference type="OpenTargets" id="ENSG00000186628"/>
<dbReference type="PharmGKB" id="PA38279"/>
<dbReference type="VEuPathDB" id="HostDB:ENSG00000186628"/>
<dbReference type="eggNOG" id="KOG2177">
    <property type="taxonomic scope" value="Eukaryota"/>
</dbReference>
<dbReference type="GeneTree" id="ENSGT00940000158441"/>
<dbReference type="HOGENOM" id="CLU_022856_0_0_1"/>
<dbReference type="InParanoid" id="A1L4K1"/>
<dbReference type="OMA" id="GIPNCEV"/>
<dbReference type="OrthoDB" id="6232067at2759"/>
<dbReference type="PAN-GO" id="A1L4K1">
    <property type="GO annotations" value="0 GO annotations based on evolutionary models"/>
</dbReference>
<dbReference type="PhylomeDB" id="A1L4K1"/>
<dbReference type="TreeFam" id="TF315216"/>
<dbReference type="PathwayCommons" id="A1L4K1"/>
<dbReference type="SignaLink" id="A1L4K1"/>
<dbReference type="BioGRID-ORCS" id="123722">
    <property type="hits" value="13 hits in 1144 CRISPR screens"/>
</dbReference>
<dbReference type="ChiTaRS" id="FSD2">
    <property type="organism name" value="human"/>
</dbReference>
<dbReference type="GenomeRNAi" id="123722"/>
<dbReference type="Pharos" id="A1L4K1">
    <property type="development level" value="Tbio"/>
</dbReference>
<dbReference type="PRO" id="PR:A1L4K1"/>
<dbReference type="Proteomes" id="UP000005640">
    <property type="component" value="Chromosome 15"/>
</dbReference>
<dbReference type="RNAct" id="A1L4K1">
    <property type="molecule type" value="protein"/>
</dbReference>
<dbReference type="Bgee" id="ENSG00000186628">
    <property type="expression patterns" value="Expressed in left ventricle myocardium and 94 other cell types or tissues"/>
</dbReference>
<dbReference type="ExpressionAtlas" id="A1L4K1">
    <property type="expression patterns" value="baseline and differential"/>
</dbReference>
<dbReference type="GO" id="GO:0005634">
    <property type="term" value="C:nucleus"/>
    <property type="evidence" value="ECO:0000250"/>
    <property type="project" value="UniProtKB"/>
</dbReference>
<dbReference type="GO" id="GO:0048471">
    <property type="term" value="C:perinuclear region of cytoplasm"/>
    <property type="evidence" value="ECO:0000250"/>
    <property type="project" value="UniProtKB"/>
</dbReference>
<dbReference type="GO" id="GO:0016529">
    <property type="term" value="C:sarcoplasmic reticulum"/>
    <property type="evidence" value="ECO:0000250"/>
    <property type="project" value="UniProtKB"/>
</dbReference>
<dbReference type="CDD" id="cd00063">
    <property type="entry name" value="FN3"/>
    <property type="match status" value="2"/>
</dbReference>
<dbReference type="CDD" id="cd12899">
    <property type="entry name" value="SPRY_PRY_TRIM76_like"/>
    <property type="match status" value="1"/>
</dbReference>
<dbReference type="FunFam" id="2.60.120.920:FF:000051">
    <property type="entry name" value="Fibronectin type III and SPRY domain containing 2"/>
    <property type="match status" value="1"/>
</dbReference>
<dbReference type="FunFam" id="2.60.40.10:FF:001757">
    <property type="entry name" value="Fibronectin type III and SPRY domain containing 2"/>
    <property type="match status" value="1"/>
</dbReference>
<dbReference type="FunFam" id="2.60.40.10:FF:001758">
    <property type="entry name" value="Fibronectin type III and SPRY domain containing 2"/>
    <property type="match status" value="1"/>
</dbReference>
<dbReference type="Gene3D" id="2.60.120.920">
    <property type="match status" value="1"/>
</dbReference>
<dbReference type="Gene3D" id="3.30.160.60">
    <property type="entry name" value="Classic Zinc Finger"/>
    <property type="match status" value="1"/>
</dbReference>
<dbReference type="Gene3D" id="2.60.40.10">
    <property type="entry name" value="Immunoglobulins"/>
    <property type="match status" value="2"/>
</dbReference>
<dbReference type="InterPro" id="IPR001870">
    <property type="entry name" value="B30.2/SPRY"/>
</dbReference>
<dbReference type="InterPro" id="IPR043136">
    <property type="entry name" value="B30.2/SPRY_sf"/>
</dbReference>
<dbReference type="InterPro" id="IPR003879">
    <property type="entry name" value="Butyrophylin_SPRY"/>
</dbReference>
<dbReference type="InterPro" id="IPR013320">
    <property type="entry name" value="ConA-like_dom_sf"/>
</dbReference>
<dbReference type="InterPro" id="IPR050617">
    <property type="entry name" value="E3_ligase_FN3/SPRY"/>
</dbReference>
<dbReference type="InterPro" id="IPR003961">
    <property type="entry name" value="FN3_dom"/>
</dbReference>
<dbReference type="InterPro" id="IPR036116">
    <property type="entry name" value="FN3_sf"/>
</dbReference>
<dbReference type="InterPro" id="IPR013783">
    <property type="entry name" value="Ig-like_fold"/>
</dbReference>
<dbReference type="InterPro" id="IPR003877">
    <property type="entry name" value="SPRY_dom"/>
</dbReference>
<dbReference type="PANTHER" id="PTHR24099">
    <property type="entry name" value="E3 UBIQUITIN-PROTEIN LIGASE TRIM36-RELATED"/>
    <property type="match status" value="1"/>
</dbReference>
<dbReference type="PANTHER" id="PTHR24099:SF6">
    <property type="entry name" value="FIBRONECTIN TYPE III AND SPRY DOMAIN-CONTAINING PROTEIN 2"/>
    <property type="match status" value="1"/>
</dbReference>
<dbReference type="Pfam" id="PF00041">
    <property type="entry name" value="fn3"/>
    <property type="match status" value="1"/>
</dbReference>
<dbReference type="Pfam" id="PF00622">
    <property type="entry name" value="SPRY"/>
    <property type="match status" value="1"/>
</dbReference>
<dbReference type="PRINTS" id="PR01407">
    <property type="entry name" value="BUTYPHLNCDUF"/>
</dbReference>
<dbReference type="SMART" id="SM00060">
    <property type="entry name" value="FN3"/>
    <property type="match status" value="2"/>
</dbReference>
<dbReference type="SMART" id="SM00449">
    <property type="entry name" value="SPRY"/>
    <property type="match status" value="1"/>
</dbReference>
<dbReference type="SUPFAM" id="SSF57845">
    <property type="entry name" value="B-box zinc-binding domain"/>
    <property type="match status" value="1"/>
</dbReference>
<dbReference type="SUPFAM" id="SSF49899">
    <property type="entry name" value="Concanavalin A-like lectins/glucanases"/>
    <property type="match status" value="1"/>
</dbReference>
<dbReference type="SUPFAM" id="SSF49265">
    <property type="entry name" value="Fibronectin type III"/>
    <property type="match status" value="1"/>
</dbReference>
<dbReference type="PROSITE" id="PS50188">
    <property type="entry name" value="B302_SPRY"/>
    <property type="match status" value="1"/>
</dbReference>
<dbReference type="PROSITE" id="PS50853">
    <property type="entry name" value="FN3"/>
    <property type="match status" value="2"/>
</dbReference>
<reference key="1">
    <citation type="journal article" date="2004" name="Nat. Genet.">
        <title>Complete sequencing and characterization of 21,243 full-length human cDNAs.</title>
        <authorList>
            <person name="Ota T."/>
            <person name="Suzuki Y."/>
            <person name="Nishikawa T."/>
            <person name="Otsuki T."/>
            <person name="Sugiyama T."/>
            <person name="Irie R."/>
            <person name="Wakamatsu A."/>
            <person name="Hayashi K."/>
            <person name="Sato H."/>
            <person name="Nagai K."/>
            <person name="Kimura K."/>
            <person name="Makita H."/>
            <person name="Sekine M."/>
            <person name="Obayashi M."/>
            <person name="Nishi T."/>
            <person name="Shibahara T."/>
            <person name="Tanaka T."/>
            <person name="Ishii S."/>
            <person name="Yamamoto J."/>
            <person name="Saito K."/>
            <person name="Kawai Y."/>
            <person name="Isono Y."/>
            <person name="Nakamura Y."/>
            <person name="Nagahari K."/>
            <person name="Murakami K."/>
            <person name="Yasuda T."/>
            <person name="Iwayanagi T."/>
            <person name="Wagatsuma M."/>
            <person name="Shiratori A."/>
            <person name="Sudo H."/>
            <person name="Hosoiri T."/>
            <person name="Kaku Y."/>
            <person name="Kodaira H."/>
            <person name="Kondo H."/>
            <person name="Sugawara M."/>
            <person name="Takahashi M."/>
            <person name="Kanda K."/>
            <person name="Yokoi T."/>
            <person name="Furuya T."/>
            <person name="Kikkawa E."/>
            <person name="Omura Y."/>
            <person name="Abe K."/>
            <person name="Kamihara K."/>
            <person name="Katsuta N."/>
            <person name="Sato K."/>
            <person name="Tanikawa M."/>
            <person name="Yamazaki M."/>
            <person name="Ninomiya K."/>
            <person name="Ishibashi T."/>
            <person name="Yamashita H."/>
            <person name="Murakawa K."/>
            <person name="Fujimori K."/>
            <person name="Tanai H."/>
            <person name="Kimata M."/>
            <person name="Watanabe M."/>
            <person name="Hiraoka S."/>
            <person name="Chiba Y."/>
            <person name="Ishida S."/>
            <person name="Ono Y."/>
            <person name="Takiguchi S."/>
            <person name="Watanabe S."/>
            <person name="Yosida M."/>
            <person name="Hotuta T."/>
            <person name="Kusano J."/>
            <person name="Kanehori K."/>
            <person name="Takahashi-Fujii A."/>
            <person name="Hara H."/>
            <person name="Tanase T.-O."/>
            <person name="Nomura Y."/>
            <person name="Togiya S."/>
            <person name="Komai F."/>
            <person name="Hara R."/>
            <person name="Takeuchi K."/>
            <person name="Arita M."/>
            <person name="Imose N."/>
            <person name="Musashino K."/>
            <person name="Yuuki H."/>
            <person name="Oshima A."/>
            <person name="Sasaki N."/>
            <person name="Aotsuka S."/>
            <person name="Yoshikawa Y."/>
            <person name="Matsunawa H."/>
            <person name="Ichihara T."/>
            <person name="Shiohata N."/>
            <person name="Sano S."/>
            <person name="Moriya S."/>
            <person name="Momiyama H."/>
            <person name="Satoh N."/>
            <person name="Takami S."/>
            <person name="Terashima Y."/>
            <person name="Suzuki O."/>
            <person name="Nakagawa S."/>
            <person name="Senoh A."/>
            <person name="Mizoguchi H."/>
            <person name="Goto Y."/>
            <person name="Shimizu F."/>
            <person name="Wakebe H."/>
            <person name="Hishigaki H."/>
            <person name="Watanabe T."/>
            <person name="Sugiyama A."/>
            <person name="Takemoto M."/>
            <person name="Kawakami B."/>
            <person name="Yamazaki M."/>
            <person name="Watanabe K."/>
            <person name="Kumagai A."/>
            <person name="Itakura S."/>
            <person name="Fukuzumi Y."/>
            <person name="Fujimori Y."/>
            <person name="Komiyama M."/>
            <person name="Tashiro H."/>
            <person name="Tanigami A."/>
            <person name="Fujiwara T."/>
            <person name="Ono T."/>
            <person name="Yamada K."/>
            <person name="Fujii Y."/>
            <person name="Ozaki K."/>
            <person name="Hirao M."/>
            <person name="Ohmori Y."/>
            <person name="Kawabata A."/>
            <person name="Hikiji T."/>
            <person name="Kobatake N."/>
            <person name="Inagaki H."/>
            <person name="Ikema Y."/>
            <person name="Okamoto S."/>
            <person name="Okitani R."/>
            <person name="Kawakami T."/>
            <person name="Noguchi S."/>
            <person name="Itoh T."/>
            <person name="Shigeta K."/>
            <person name="Senba T."/>
            <person name="Matsumura K."/>
            <person name="Nakajima Y."/>
            <person name="Mizuno T."/>
            <person name="Morinaga M."/>
            <person name="Sasaki M."/>
            <person name="Togashi T."/>
            <person name="Oyama M."/>
            <person name="Hata H."/>
            <person name="Watanabe M."/>
            <person name="Komatsu T."/>
            <person name="Mizushima-Sugano J."/>
            <person name="Satoh T."/>
            <person name="Shirai Y."/>
            <person name="Takahashi Y."/>
            <person name="Nakagawa K."/>
            <person name="Okumura K."/>
            <person name="Nagase T."/>
            <person name="Nomura N."/>
            <person name="Kikuchi H."/>
            <person name="Masuho Y."/>
            <person name="Yamashita R."/>
            <person name="Nakai K."/>
            <person name="Yada T."/>
            <person name="Nakamura Y."/>
            <person name="Ohara O."/>
            <person name="Isogai T."/>
            <person name="Sugano S."/>
        </authorList>
    </citation>
    <scope>NUCLEOTIDE SEQUENCE [LARGE SCALE MRNA] (ISOFORM 1)</scope>
    <source>
        <tissue>Heart</tissue>
    </source>
</reference>
<reference key="2">
    <citation type="journal article" date="2006" name="Nature">
        <title>Analysis of the DNA sequence and duplication history of human chromosome 15.</title>
        <authorList>
            <person name="Zody M.C."/>
            <person name="Garber M."/>
            <person name="Sharpe T."/>
            <person name="Young S.K."/>
            <person name="Rowen L."/>
            <person name="O'Neill K."/>
            <person name="Whittaker C.A."/>
            <person name="Kamal M."/>
            <person name="Chang J.L."/>
            <person name="Cuomo C.A."/>
            <person name="Dewar K."/>
            <person name="FitzGerald M.G."/>
            <person name="Kodira C.D."/>
            <person name="Madan A."/>
            <person name="Qin S."/>
            <person name="Yang X."/>
            <person name="Abbasi N."/>
            <person name="Abouelleil A."/>
            <person name="Arachchi H.M."/>
            <person name="Baradarani L."/>
            <person name="Birditt B."/>
            <person name="Bloom S."/>
            <person name="Bloom T."/>
            <person name="Borowsky M.L."/>
            <person name="Burke J."/>
            <person name="Butler J."/>
            <person name="Cook A."/>
            <person name="DeArellano K."/>
            <person name="DeCaprio D."/>
            <person name="Dorris L. III"/>
            <person name="Dors M."/>
            <person name="Eichler E.E."/>
            <person name="Engels R."/>
            <person name="Fahey J."/>
            <person name="Fleetwood P."/>
            <person name="Friedman C."/>
            <person name="Gearin G."/>
            <person name="Hall J.L."/>
            <person name="Hensley G."/>
            <person name="Johnson E."/>
            <person name="Jones C."/>
            <person name="Kamat A."/>
            <person name="Kaur A."/>
            <person name="Locke D.P."/>
            <person name="Madan A."/>
            <person name="Munson G."/>
            <person name="Jaffe D.B."/>
            <person name="Lui A."/>
            <person name="Macdonald P."/>
            <person name="Mauceli E."/>
            <person name="Naylor J.W."/>
            <person name="Nesbitt R."/>
            <person name="Nicol R."/>
            <person name="O'Leary S.B."/>
            <person name="Ratcliffe A."/>
            <person name="Rounsley S."/>
            <person name="She X."/>
            <person name="Sneddon K.M.B."/>
            <person name="Stewart S."/>
            <person name="Sougnez C."/>
            <person name="Stone S.M."/>
            <person name="Topham K."/>
            <person name="Vincent D."/>
            <person name="Wang S."/>
            <person name="Zimmer A.R."/>
            <person name="Birren B.W."/>
            <person name="Hood L."/>
            <person name="Lander E.S."/>
            <person name="Nusbaum C."/>
        </authorList>
    </citation>
    <scope>NUCLEOTIDE SEQUENCE [LARGE SCALE GENOMIC DNA]</scope>
</reference>
<reference key="3">
    <citation type="journal article" date="2004" name="Genome Res.">
        <title>The status, quality, and expansion of the NIH full-length cDNA project: the Mammalian Gene Collection (MGC).</title>
        <authorList>
            <consortium name="The MGC Project Team"/>
        </authorList>
    </citation>
    <scope>NUCLEOTIDE SEQUENCE [LARGE SCALE MRNA] (ISOFORMS 1 AND 2)</scope>
</reference>
<evidence type="ECO:0000250" key="1">
    <source>
        <dbReference type="UniProtKB" id="H0UZ81"/>
    </source>
</evidence>
<evidence type="ECO:0000250" key="2">
    <source>
        <dbReference type="UniProtKB" id="Q8BZ52"/>
    </source>
</evidence>
<evidence type="ECO:0000255" key="3"/>
<evidence type="ECO:0000255" key="4">
    <source>
        <dbReference type="PROSITE-ProRule" id="PRU00316"/>
    </source>
</evidence>
<evidence type="ECO:0000255" key="5">
    <source>
        <dbReference type="PROSITE-ProRule" id="PRU00548"/>
    </source>
</evidence>
<evidence type="ECO:0000303" key="6">
    <source>
    </source>
</evidence>
<accession>A1L4K1</accession>
<accession>B3KVG1</accession>
<accession>B7ZM02</accession>
<organism>
    <name type="scientific">Homo sapiens</name>
    <name type="common">Human</name>
    <dbReference type="NCBI Taxonomy" id="9606"/>
    <lineage>
        <taxon>Eukaryota</taxon>
        <taxon>Metazoa</taxon>
        <taxon>Chordata</taxon>
        <taxon>Craniata</taxon>
        <taxon>Vertebrata</taxon>
        <taxon>Euteleostomi</taxon>
        <taxon>Mammalia</taxon>
        <taxon>Eutheria</taxon>
        <taxon>Euarchontoglires</taxon>
        <taxon>Primates</taxon>
        <taxon>Haplorrhini</taxon>
        <taxon>Catarrhini</taxon>
        <taxon>Hominidae</taxon>
        <taxon>Homo</taxon>
    </lineage>
</organism>
<feature type="chain" id="PRO_0000317362" description="Fibronectin type III and SPRY domain-containing protein 2">
    <location>
        <begin position="1"/>
        <end position="749"/>
    </location>
</feature>
<feature type="domain" description="Fibronectin type-III 1" evidence="4">
    <location>
        <begin position="375"/>
        <end position="470"/>
    </location>
</feature>
<feature type="domain" description="Fibronectin type-III 2" evidence="4">
    <location>
        <begin position="471"/>
        <end position="564"/>
    </location>
</feature>
<feature type="domain" description="B30.2/SPRY" evidence="5">
    <location>
        <begin position="546"/>
        <end position="744"/>
    </location>
</feature>
<feature type="coiled-coil region" evidence="3">
    <location>
        <begin position="205"/>
        <end position="317"/>
    </location>
</feature>
<feature type="splice variant" id="VSP_054600" description="In isoform 2." evidence="6">
    <location>
        <begin position="423"/>
        <end position="467"/>
    </location>
</feature>
<feature type="sequence variant" id="VAR_051001" description="In dbSNP:rs4779061.">
    <original>K</original>
    <variation>T</variation>
    <location>
        <position position="333"/>
    </location>
</feature>
<feature type="sequence variant" id="VAR_051002" description="In dbSNP:rs1108134.">
    <original>E</original>
    <variation>K</variation>
    <location>
        <position position="720"/>
    </location>
</feature>
<gene>
    <name type="primary">FSD2</name>
    <name type="synonym">SPRYD1</name>
</gene>
<protein>
    <recommendedName>
        <fullName>Fibronectin type III and SPRY domain-containing protein 2</fullName>
    </recommendedName>
    <alternativeName>
        <fullName>SPRY domain-containing protein 1</fullName>
    </alternativeName>
</protein>